<comment type="function">
    <text evidence="1">DNA-binding protein that induces severe bending of DNA. Required for DNA-binding by the FACT complex, a general chromatin factor that acts to reorganize nucleosomes. The FACT complex is involved in multiple processes that require DNA as a template such as mRNA elongation, DNA replication and DNA repair. Also augments the fidelity of transcription by RNA polymerase III independently of any role in the FACT complex (By similarity).</text>
</comment>
<comment type="subunit">
    <text evidence="1">Weakly associates with the stable SPT16-POB3 heterodimer to form the FACT complex.</text>
</comment>
<comment type="subcellular location">
    <subcellularLocation>
        <location evidence="2">Nucleus</location>
    </subcellularLocation>
    <subcellularLocation>
        <location evidence="1">Chromosome</location>
    </subcellularLocation>
</comment>
<comment type="similarity">
    <text evidence="4">Belongs to the NHP6 family.</text>
</comment>
<feature type="chain" id="PRO_0000245219" description="Non-histone chromosomal protein 6">
    <location>
        <begin position="1"/>
        <end position="101"/>
    </location>
</feature>
<feature type="DNA-binding region" description="HMG box" evidence="2">
    <location>
        <begin position="24"/>
        <end position="92"/>
    </location>
</feature>
<feature type="region of interest" description="Disordered" evidence="3">
    <location>
        <begin position="1"/>
        <end position="27"/>
    </location>
</feature>
<feature type="region of interest" description="Disordered" evidence="3">
    <location>
        <begin position="69"/>
        <end position="101"/>
    </location>
</feature>
<feature type="compositionally biased region" description="Basic and acidic residues" evidence="3">
    <location>
        <begin position="69"/>
        <end position="89"/>
    </location>
</feature>
<accession>Q4IQX3</accession>
<accession>A0A0E0RM32</accession>
<accession>V6QV35</accession>
<protein>
    <recommendedName>
        <fullName>Non-histone chromosomal protein 6</fullName>
    </recommendedName>
</protein>
<name>NHP6_GIBZE</name>
<dbReference type="EMBL" id="DS231663">
    <property type="protein sequence ID" value="ESU05562.1"/>
    <property type="molecule type" value="Genomic_DNA"/>
</dbReference>
<dbReference type="EMBL" id="HG970332">
    <property type="protein sequence ID" value="CEF72307.1"/>
    <property type="molecule type" value="Genomic_DNA"/>
</dbReference>
<dbReference type="RefSeq" id="XP_011316047.1">
    <property type="nucleotide sequence ID" value="XM_011317745.1"/>
</dbReference>
<dbReference type="SMR" id="Q4IQX3"/>
<dbReference type="FunCoup" id="Q4IQX3">
    <property type="interactions" value="444"/>
</dbReference>
<dbReference type="STRING" id="229533.Q4IQX3"/>
<dbReference type="GeneID" id="23547875"/>
<dbReference type="KEGG" id="fgr:FGSG_00385"/>
<dbReference type="VEuPathDB" id="FungiDB:FGRAMPH1_01G01009"/>
<dbReference type="eggNOG" id="KOG0381">
    <property type="taxonomic scope" value="Eukaryota"/>
</dbReference>
<dbReference type="HOGENOM" id="CLU_082854_10_1_1"/>
<dbReference type="InParanoid" id="Q4IQX3"/>
<dbReference type="OrthoDB" id="53147at110618"/>
<dbReference type="PHI-base" id="PHI:1470"/>
<dbReference type="Proteomes" id="UP000070720">
    <property type="component" value="Chromosome 1"/>
</dbReference>
<dbReference type="GO" id="GO:0005694">
    <property type="term" value="C:chromosome"/>
    <property type="evidence" value="ECO:0007669"/>
    <property type="project" value="UniProtKB-SubCell"/>
</dbReference>
<dbReference type="GO" id="GO:0005634">
    <property type="term" value="C:nucleus"/>
    <property type="evidence" value="ECO:0007669"/>
    <property type="project" value="UniProtKB-SubCell"/>
</dbReference>
<dbReference type="GO" id="GO:0003677">
    <property type="term" value="F:DNA binding"/>
    <property type="evidence" value="ECO:0007669"/>
    <property type="project" value="UniProtKB-KW"/>
</dbReference>
<dbReference type="GO" id="GO:0006281">
    <property type="term" value="P:DNA repair"/>
    <property type="evidence" value="ECO:0007669"/>
    <property type="project" value="UniProtKB-KW"/>
</dbReference>
<dbReference type="CDD" id="cd01390">
    <property type="entry name" value="HMG-box_NHP6-like"/>
    <property type="match status" value="1"/>
</dbReference>
<dbReference type="FunFam" id="1.10.30.10:FF:000016">
    <property type="entry name" value="FACT complex subunit SSRP1"/>
    <property type="match status" value="1"/>
</dbReference>
<dbReference type="Gene3D" id="1.10.30.10">
    <property type="entry name" value="High mobility group box domain"/>
    <property type="match status" value="1"/>
</dbReference>
<dbReference type="InterPro" id="IPR009071">
    <property type="entry name" value="HMG_box_dom"/>
</dbReference>
<dbReference type="InterPro" id="IPR036910">
    <property type="entry name" value="HMG_box_dom_sf"/>
</dbReference>
<dbReference type="InterPro" id="IPR050342">
    <property type="entry name" value="HMGB"/>
</dbReference>
<dbReference type="PANTHER" id="PTHR48112">
    <property type="entry name" value="HIGH MOBILITY GROUP PROTEIN DSP1"/>
    <property type="match status" value="1"/>
</dbReference>
<dbReference type="PANTHER" id="PTHR48112:SF22">
    <property type="entry name" value="MITOCHONDRIAL TRANSCRIPTION FACTOR A, ISOFORM B"/>
    <property type="match status" value="1"/>
</dbReference>
<dbReference type="Pfam" id="PF00505">
    <property type="entry name" value="HMG_box"/>
    <property type="match status" value="1"/>
</dbReference>
<dbReference type="PRINTS" id="PR00886">
    <property type="entry name" value="HIGHMOBLTY12"/>
</dbReference>
<dbReference type="SMART" id="SM00398">
    <property type="entry name" value="HMG"/>
    <property type="match status" value="1"/>
</dbReference>
<dbReference type="SUPFAM" id="SSF47095">
    <property type="entry name" value="HMG-box"/>
    <property type="match status" value="1"/>
</dbReference>
<dbReference type="PROSITE" id="PS50118">
    <property type="entry name" value="HMG_BOX_2"/>
    <property type="match status" value="1"/>
</dbReference>
<gene>
    <name type="primary">NHP6</name>
    <name type="ORF">FGRRES_00385</name>
    <name type="ORF">FGSG_00385</name>
</gene>
<keyword id="KW-0158">Chromosome</keyword>
<keyword id="KW-0227">DNA damage</keyword>
<keyword id="KW-0234">DNA repair</keyword>
<keyword id="KW-0238">DNA-binding</keyword>
<keyword id="KW-0539">Nucleus</keyword>
<keyword id="KW-1185">Reference proteome</keyword>
<keyword id="KW-0804">Transcription</keyword>
<keyword id="KW-0805">Transcription regulation</keyword>
<organism>
    <name type="scientific">Gibberella zeae (strain ATCC MYA-4620 / CBS 123657 / FGSC 9075 / NRRL 31084 / PH-1)</name>
    <name type="common">Wheat head blight fungus</name>
    <name type="synonym">Fusarium graminearum</name>
    <dbReference type="NCBI Taxonomy" id="229533"/>
    <lineage>
        <taxon>Eukaryota</taxon>
        <taxon>Fungi</taxon>
        <taxon>Dikarya</taxon>
        <taxon>Ascomycota</taxon>
        <taxon>Pezizomycotina</taxon>
        <taxon>Sordariomycetes</taxon>
        <taxon>Hypocreomycetidae</taxon>
        <taxon>Hypocreales</taxon>
        <taxon>Nectriaceae</taxon>
        <taxon>Fusarium</taxon>
    </lineage>
</organism>
<proteinExistence type="inferred from homology"/>
<sequence length="101" mass="11488">MPKAAAPAKRATRTKRAKKDPNAPKRGLSAYMFFANEQRENVREENPGISFGQVGKLLGERWKALNEKQRAPYEAKAAADKKRYEDEKQAYNADQEEEESS</sequence>
<reference key="1">
    <citation type="journal article" date="2007" name="Science">
        <title>The Fusarium graminearum genome reveals a link between localized polymorphism and pathogen specialization.</title>
        <authorList>
            <person name="Cuomo C.A."/>
            <person name="Gueldener U."/>
            <person name="Xu J.-R."/>
            <person name="Trail F."/>
            <person name="Turgeon B.G."/>
            <person name="Di Pietro A."/>
            <person name="Walton J.D."/>
            <person name="Ma L.-J."/>
            <person name="Baker S.E."/>
            <person name="Rep M."/>
            <person name="Adam G."/>
            <person name="Antoniw J."/>
            <person name="Baldwin T."/>
            <person name="Calvo S.E."/>
            <person name="Chang Y.-L."/>
            <person name="DeCaprio D."/>
            <person name="Gale L.R."/>
            <person name="Gnerre S."/>
            <person name="Goswami R.S."/>
            <person name="Hammond-Kosack K."/>
            <person name="Harris L.J."/>
            <person name="Hilburn K."/>
            <person name="Kennell J.C."/>
            <person name="Kroken S."/>
            <person name="Magnuson J.K."/>
            <person name="Mannhaupt G."/>
            <person name="Mauceli E.W."/>
            <person name="Mewes H.-W."/>
            <person name="Mitterbauer R."/>
            <person name="Muehlbauer G."/>
            <person name="Muensterkoetter M."/>
            <person name="Nelson D."/>
            <person name="O'Donnell K."/>
            <person name="Ouellet T."/>
            <person name="Qi W."/>
            <person name="Quesneville H."/>
            <person name="Roncero M.I.G."/>
            <person name="Seong K.-Y."/>
            <person name="Tetko I.V."/>
            <person name="Urban M."/>
            <person name="Waalwijk C."/>
            <person name="Ward T.J."/>
            <person name="Yao J."/>
            <person name="Birren B.W."/>
            <person name="Kistler H.C."/>
        </authorList>
    </citation>
    <scope>NUCLEOTIDE SEQUENCE [LARGE SCALE GENOMIC DNA]</scope>
    <source>
        <strain>ATCC MYA-4620 / CBS 123657 / FGSC 9075 / NRRL 31084 / PH-1</strain>
    </source>
</reference>
<reference key="2">
    <citation type="journal article" date="2010" name="Nature">
        <title>Comparative genomics reveals mobile pathogenicity chromosomes in Fusarium.</title>
        <authorList>
            <person name="Ma L.-J."/>
            <person name="van der Does H.C."/>
            <person name="Borkovich K.A."/>
            <person name="Coleman J.J."/>
            <person name="Daboussi M.-J."/>
            <person name="Di Pietro A."/>
            <person name="Dufresne M."/>
            <person name="Freitag M."/>
            <person name="Grabherr M."/>
            <person name="Henrissat B."/>
            <person name="Houterman P.M."/>
            <person name="Kang S."/>
            <person name="Shim W.-B."/>
            <person name="Woloshuk C."/>
            <person name="Xie X."/>
            <person name="Xu J.-R."/>
            <person name="Antoniw J."/>
            <person name="Baker S.E."/>
            <person name="Bluhm B.H."/>
            <person name="Breakspear A."/>
            <person name="Brown D.W."/>
            <person name="Butchko R.A.E."/>
            <person name="Chapman S."/>
            <person name="Coulson R."/>
            <person name="Coutinho P.M."/>
            <person name="Danchin E.G.J."/>
            <person name="Diener A."/>
            <person name="Gale L.R."/>
            <person name="Gardiner D.M."/>
            <person name="Goff S."/>
            <person name="Hammond-Kosack K.E."/>
            <person name="Hilburn K."/>
            <person name="Hua-Van A."/>
            <person name="Jonkers W."/>
            <person name="Kazan K."/>
            <person name="Kodira C.D."/>
            <person name="Koehrsen M."/>
            <person name="Kumar L."/>
            <person name="Lee Y.-H."/>
            <person name="Li L."/>
            <person name="Manners J.M."/>
            <person name="Miranda-Saavedra D."/>
            <person name="Mukherjee M."/>
            <person name="Park G."/>
            <person name="Park J."/>
            <person name="Park S.-Y."/>
            <person name="Proctor R.H."/>
            <person name="Regev A."/>
            <person name="Ruiz-Roldan M.C."/>
            <person name="Sain D."/>
            <person name="Sakthikumar S."/>
            <person name="Sykes S."/>
            <person name="Schwartz D.C."/>
            <person name="Turgeon B.G."/>
            <person name="Wapinski I."/>
            <person name="Yoder O."/>
            <person name="Young S."/>
            <person name="Zeng Q."/>
            <person name="Zhou S."/>
            <person name="Galagan J."/>
            <person name="Cuomo C.A."/>
            <person name="Kistler H.C."/>
            <person name="Rep M."/>
        </authorList>
    </citation>
    <scope>GENOME REANNOTATION</scope>
    <source>
        <strain>ATCC MYA-4620 / CBS 123657 / FGSC 9075 / NRRL 31084 / PH-1</strain>
    </source>
</reference>
<reference key="3">
    <citation type="journal article" date="2015" name="BMC Genomics">
        <title>The completed genome sequence of the pathogenic ascomycete fungus Fusarium graminearum.</title>
        <authorList>
            <person name="King R."/>
            <person name="Urban M."/>
            <person name="Hammond-Kosack M.C.U."/>
            <person name="Hassani-Pak K."/>
            <person name="Hammond-Kosack K.E."/>
        </authorList>
    </citation>
    <scope>NUCLEOTIDE SEQUENCE [LARGE SCALE GENOMIC DNA]</scope>
    <source>
        <strain>ATCC MYA-4620 / CBS 123657 / FGSC 9075 / NRRL 31084 / PH-1</strain>
    </source>
</reference>
<evidence type="ECO:0000250" key="1"/>
<evidence type="ECO:0000255" key="2">
    <source>
        <dbReference type="PROSITE-ProRule" id="PRU00267"/>
    </source>
</evidence>
<evidence type="ECO:0000256" key="3">
    <source>
        <dbReference type="SAM" id="MobiDB-lite"/>
    </source>
</evidence>
<evidence type="ECO:0000305" key="4"/>